<feature type="chain" id="PRO_0000266850" description="Probable GTP-binding protein EngB">
    <location>
        <begin position="1"/>
        <end position="201"/>
    </location>
</feature>
<feature type="domain" description="EngB-type G" evidence="1">
    <location>
        <begin position="23"/>
        <end position="196"/>
    </location>
</feature>
<feature type="binding site" evidence="1">
    <location>
        <begin position="31"/>
        <end position="38"/>
    </location>
    <ligand>
        <name>GTP</name>
        <dbReference type="ChEBI" id="CHEBI:37565"/>
    </ligand>
</feature>
<feature type="binding site" evidence="1">
    <location>
        <position position="38"/>
    </location>
    <ligand>
        <name>Mg(2+)</name>
        <dbReference type="ChEBI" id="CHEBI:18420"/>
    </ligand>
</feature>
<feature type="binding site" evidence="1">
    <location>
        <begin position="58"/>
        <end position="62"/>
    </location>
    <ligand>
        <name>GTP</name>
        <dbReference type="ChEBI" id="CHEBI:37565"/>
    </ligand>
</feature>
<feature type="binding site" evidence="1">
    <location>
        <position position="60"/>
    </location>
    <ligand>
        <name>Mg(2+)</name>
        <dbReference type="ChEBI" id="CHEBI:18420"/>
    </ligand>
</feature>
<feature type="binding site" evidence="1">
    <location>
        <begin position="76"/>
        <end position="79"/>
    </location>
    <ligand>
        <name>GTP</name>
        <dbReference type="ChEBI" id="CHEBI:37565"/>
    </ligand>
</feature>
<feature type="binding site" evidence="1">
    <location>
        <begin position="143"/>
        <end position="146"/>
    </location>
    <ligand>
        <name>GTP</name>
        <dbReference type="ChEBI" id="CHEBI:37565"/>
    </ligand>
</feature>
<feature type="binding site" evidence="1">
    <location>
        <begin position="175"/>
        <end position="177"/>
    </location>
    <ligand>
        <name>GTP</name>
        <dbReference type="ChEBI" id="CHEBI:37565"/>
    </ligand>
</feature>
<proteinExistence type="inferred from homology"/>
<gene>
    <name evidence="1" type="primary">engB</name>
    <name type="ordered locus">DSY3194</name>
</gene>
<reference key="1">
    <citation type="journal article" date="2006" name="J. Bacteriol.">
        <title>Complete genome sequence of the dehalorespiring bacterium Desulfitobacterium hafniense Y51 and comparison with Dehalococcoides ethenogenes 195.</title>
        <authorList>
            <person name="Nonaka H."/>
            <person name="Keresztes G."/>
            <person name="Shinoda Y."/>
            <person name="Ikenaga Y."/>
            <person name="Abe M."/>
            <person name="Naito K."/>
            <person name="Inatomi K."/>
            <person name="Furukawa K."/>
            <person name="Inui M."/>
            <person name="Yukawa H."/>
        </authorList>
    </citation>
    <scope>NUCLEOTIDE SEQUENCE [LARGE SCALE GENOMIC DNA]</scope>
    <source>
        <strain>Y51</strain>
    </source>
</reference>
<comment type="function">
    <text evidence="1">Necessary for normal cell division and for the maintenance of normal septation.</text>
</comment>
<comment type="cofactor">
    <cofactor evidence="1">
        <name>Mg(2+)</name>
        <dbReference type="ChEBI" id="CHEBI:18420"/>
    </cofactor>
</comment>
<comment type="similarity">
    <text evidence="1">Belongs to the TRAFAC class TrmE-Era-EngA-EngB-Septin-like GTPase superfamily. EngB GTPase family.</text>
</comment>
<name>ENGB_DESHY</name>
<dbReference type="EMBL" id="AP008230">
    <property type="protein sequence ID" value="BAE84983.1"/>
    <property type="molecule type" value="Genomic_DNA"/>
</dbReference>
<dbReference type="SMR" id="Q24SK9"/>
<dbReference type="STRING" id="138119.DSY3194"/>
<dbReference type="KEGG" id="dsy:DSY3194"/>
<dbReference type="eggNOG" id="COG0218">
    <property type="taxonomic scope" value="Bacteria"/>
</dbReference>
<dbReference type="HOGENOM" id="CLU_033732_3_0_9"/>
<dbReference type="Proteomes" id="UP000001946">
    <property type="component" value="Chromosome"/>
</dbReference>
<dbReference type="GO" id="GO:0005829">
    <property type="term" value="C:cytosol"/>
    <property type="evidence" value="ECO:0007669"/>
    <property type="project" value="TreeGrafter"/>
</dbReference>
<dbReference type="GO" id="GO:0005525">
    <property type="term" value="F:GTP binding"/>
    <property type="evidence" value="ECO:0007669"/>
    <property type="project" value="UniProtKB-UniRule"/>
</dbReference>
<dbReference type="GO" id="GO:0046872">
    <property type="term" value="F:metal ion binding"/>
    <property type="evidence" value="ECO:0007669"/>
    <property type="project" value="UniProtKB-KW"/>
</dbReference>
<dbReference type="GO" id="GO:0000917">
    <property type="term" value="P:division septum assembly"/>
    <property type="evidence" value="ECO:0007669"/>
    <property type="project" value="UniProtKB-KW"/>
</dbReference>
<dbReference type="CDD" id="cd01876">
    <property type="entry name" value="YihA_EngB"/>
    <property type="match status" value="1"/>
</dbReference>
<dbReference type="FunFam" id="3.40.50.300:FF:000098">
    <property type="entry name" value="Probable GTP-binding protein EngB"/>
    <property type="match status" value="1"/>
</dbReference>
<dbReference type="Gene3D" id="3.40.50.300">
    <property type="entry name" value="P-loop containing nucleotide triphosphate hydrolases"/>
    <property type="match status" value="1"/>
</dbReference>
<dbReference type="HAMAP" id="MF_00321">
    <property type="entry name" value="GTPase_EngB"/>
    <property type="match status" value="1"/>
</dbReference>
<dbReference type="InterPro" id="IPR030393">
    <property type="entry name" value="G_ENGB_dom"/>
</dbReference>
<dbReference type="InterPro" id="IPR006073">
    <property type="entry name" value="GTP-bd"/>
</dbReference>
<dbReference type="InterPro" id="IPR019987">
    <property type="entry name" value="GTP-bd_ribosome_bio_YsxC"/>
</dbReference>
<dbReference type="InterPro" id="IPR027417">
    <property type="entry name" value="P-loop_NTPase"/>
</dbReference>
<dbReference type="NCBIfam" id="TIGR03598">
    <property type="entry name" value="GTPase_YsxC"/>
    <property type="match status" value="1"/>
</dbReference>
<dbReference type="PANTHER" id="PTHR11649:SF13">
    <property type="entry name" value="ENGB-TYPE G DOMAIN-CONTAINING PROTEIN"/>
    <property type="match status" value="1"/>
</dbReference>
<dbReference type="PANTHER" id="PTHR11649">
    <property type="entry name" value="MSS1/TRME-RELATED GTP-BINDING PROTEIN"/>
    <property type="match status" value="1"/>
</dbReference>
<dbReference type="Pfam" id="PF01926">
    <property type="entry name" value="MMR_HSR1"/>
    <property type="match status" value="1"/>
</dbReference>
<dbReference type="PRINTS" id="PR00449">
    <property type="entry name" value="RASTRNSFRMNG"/>
</dbReference>
<dbReference type="SUPFAM" id="SSF52540">
    <property type="entry name" value="P-loop containing nucleoside triphosphate hydrolases"/>
    <property type="match status" value="1"/>
</dbReference>
<dbReference type="PROSITE" id="PS51706">
    <property type="entry name" value="G_ENGB"/>
    <property type="match status" value="1"/>
</dbReference>
<sequence>MITIRKAEFVTSAVNIKGYPELTGPEIALAGRSNVGKSSLINKFINRRNLARTGNTPGKTQMLNFYRINDQWSFVDLPGYGYAKVSKEIKANWGKMMEEYFSRRENLRAVIQVVDIRHVPSVEDQEMHAFLRNRGIPVLVVATKADKISKGQWGKHLSQIAKALHIPDWHIIITYSAETGLGVPELHEAVEEILSMDNEDS</sequence>
<organism>
    <name type="scientific">Desulfitobacterium hafniense (strain Y51)</name>
    <dbReference type="NCBI Taxonomy" id="138119"/>
    <lineage>
        <taxon>Bacteria</taxon>
        <taxon>Bacillati</taxon>
        <taxon>Bacillota</taxon>
        <taxon>Clostridia</taxon>
        <taxon>Eubacteriales</taxon>
        <taxon>Desulfitobacteriaceae</taxon>
        <taxon>Desulfitobacterium</taxon>
    </lineage>
</organism>
<protein>
    <recommendedName>
        <fullName evidence="1">Probable GTP-binding protein EngB</fullName>
    </recommendedName>
</protein>
<evidence type="ECO:0000255" key="1">
    <source>
        <dbReference type="HAMAP-Rule" id="MF_00321"/>
    </source>
</evidence>
<accession>Q24SK9</accession>
<keyword id="KW-0131">Cell cycle</keyword>
<keyword id="KW-0132">Cell division</keyword>
<keyword id="KW-0342">GTP-binding</keyword>
<keyword id="KW-0460">Magnesium</keyword>
<keyword id="KW-0479">Metal-binding</keyword>
<keyword id="KW-0547">Nucleotide-binding</keyword>
<keyword id="KW-1185">Reference proteome</keyword>
<keyword id="KW-0717">Septation</keyword>